<organism>
    <name type="scientific">Lactococcus lactis subsp. cremoris (strain SK11)</name>
    <dbReference type="NCBI Taxonomy" id="272622"/>
    <lineage>
        <taxon>Bacteria</taxon>
        <taxon>Bacillati</taxon>
        <taxon>Bacillota</taxon>
        <taxon>Bacilli</taxon>
        <taxon>Lactobacillales</taxon>
        <taxon>Streptococcaceae</taxon>
        <taxon>Lactococcus</taxon>
        <taxon>Lactococcus cremoris subsp. cremoris</taxon>
    </lineage>
</organism>
<comment type="function">
    <text evidence="1">The RecF protein is involved in DNA metabolism; it is required for DNA replication and normal SOS inducibility. RecF binds preferentially to single-stranded, linear DNA. It also seems to bind ATP.</text>
</comment>
<comment type="subcellular location">
    <subcellularLocation>
        <location evidence="1">Cytoplasm</location>
    </subcellularLocation>
</comment>
<comment type="similarity">
    <text evidence="1">Belongs to the RecF family.</text>
</comment>
<proteinExistence type="inferred from homology"/>
<evidence type="ECO:0000255" key="1">
    <source>
        <dbReference type="HAMAP-Rule" id="MF_00365"/>
    </source>
</evidence>
<accession>Q02WH8</accession>
<protein>
    <recommendedName>
        <fullName evidence="1">DNA replication and repair protein RecF</fullName>
    </recommendedName>
</protein>
<feature type="chain" id="PRO_1000048535" description="DNA replication and repair protein RecF">
    <location>
        <begin position="1"/>
        <end position="359"/>
    </location>
</feature>
<feature type="binding site" evidence="1">
    <location>
        <begin position="30"/>
        <end position="37"/>
    </location>
    <ligand>
        <name>ATP</name>
        <dbReference type="ChEBI" id="CHEBI:30616"/>
    </ligand>
</feature>
<gene>
    <name evidence="1" type="primary">recF</name>
    <name type="ordered locus">LACR_2238</name>
</gene>
<sequence>MKLKQIELKNFRNYEDLKLDFHPNLNIFLGQNAQGKTNILEAIHFLALTRSHRTSHDKELICWSGQEMKVSGLVEKAHATVPLEVQLSSKGRIAKANHLKENRLADYIGQLKILMFAPENLELVKGSPATRRRFMDIELGQIHAVYLYDSMRYNRALKERNAYLKFDQAKIDKNFLTVLDEQLAEHGNKIMFERKTFIEKLEIHAKKIHEQLTHGLETLKITYNQNVKTDFSKELLSRQDHDIFRHQTTVGPHRDDLQFFINEINVADFGSQGQQRTVALSIKLAEIDLIFEETGEYPILLLDDVMSELDNHRQLDLIETSLGKTQTFITTTTLDHLKNLPENLSIFHVTDGTIEKEKE</sequence>
<reference key="1">
    <citation type="journal article" date="2006" name="Proc. Natl. Acad. Sci. U.S.A.">
        <title>Comparative genomics of the lactic acid bacteria.</title>
        <authorList>
            <person name="Makarova K.S."/>
            <person name="Slesarev A."/>
            <person name="Wolf Y.I."/>
            <person name="Sorokin A."/>
            <person name="Mirkin B."/>
            <person name="Koonin E.V."/>
            <person name="Pavlov A."/>
            <person name="Pavlova N."/>
            <person name="Karamychev V."/>
            <person name="Polouchine N."/>
            <person name="Shakhova V."/>
            <person name="Grigoriev I."/>
            <person name="Lou Y."/>
            <person name="Rohksar D."/>
            <person name="Lucas S."/>
            <person name="Huang K."/>
            <person name="Goodstein D.M."/>
            <person name="Hawkins T."/>
            <person name="Plengvidhya V."/>
            <person name="Welker D."/>
            <person name="Hughes J."/>
            <person name="Goh Y."/>
            <person name="Benson A."/>
            <person name="Baldwin K."/>
            <person name="Lee J.-H."/>
            <person name="Diaz-Muniz I."/>
            <person name="Dosti B."/>
            <person name="Smeianov V."/>
            <person name="Wechter W."/>
            <person name="Barabote R."/>
            <person name="Lorca G."/>
            <person name="Altermann E."/>
            <person name="Barrangou R."/>
            <person name="Ganesan B."/>
            <person name="Xie Y."/>
            <person name="Rawsthorne H."/>
            <person name="Tamir D."/>
            <person name="Parker C."/>
            <person name="Breidt F."/>
            <person name="Broadbent J.R."/>
            <person name="Hutkins R."/>
            <person name="O'Sullivan D."/>
            <person name="Steele J."/>
            <person name="Unlu G."/>
            <person name="Saier M.H. Jr."/>
            <person name="Klaenhammer T."/>
            <person name="Richardson P."/>
            <person name="Kozyavkin S."/>
            <person name="Weimer B.C."/>
            <person name="Mills D.A."/>
        </authorList>
    </citation>
    <scope>NUCLEOTIDE SEQUENCE [LARGE SCALE GENOMIC DNA]</scope>
    <source>
        <strain>SK11</strain>
    </source>
</reference>
<keyword id="KW-0067">ATP-binding</keyword>
<keyword id="KW-0963">Cytoplasm</keyword>
<keyword id="KW-0227">DNA damage</keyword>
<keyword id="KW-0234">DNA repair</keyword>
<keyword id="KW-0235">DNA replication</keyword>
<keyword id="KW-0238">DNA-binding</keyword>
<keyword id="KW-0547">Nucleotide-binding</keyword>
<keyword id="KW-0742">SOS response</keyword>
<name>RECF_LACLS</name>
<dbReference type="EMBL" id="CP000425">
    <property type="protein sequence ID" value="ABJ73694.1"/>
    <property type="molecule type" value="Genomic_DNA"/>
</dbReference>
<dbReference type="RefSeq" id="WP_011677029.1">
    <property type="nucleotide sequence ID" value="NC_008527.1"/>
</dbReference>
<dbReference type="SMR" id="Q02WH8"/>
<dbReference type="KEGG" id="llc:LACR_2238"/>
<dbReference type="HOGENOM" id="CLU_040267_0_1_9"/>
<dbReference type="Proteomes" id="UP000000240">
    <property type="component" value="Chromosome"/>
</dbReference>
<dbReference type="GO" id="GO:0005737">
    <property type="term" value="C:cytoplasm"/>
    <property type="evidence" value="ECO:0007669"/>
    <property type="project" value="UniProtKB-SubCell"/>
</dbReference>
<dbReference type="GO" id="GO:0005524">
    <property type="term" value="F:ATP binding"/>
    <property type="evidence" value="ECO:0007669"/>
    <property type="project" value="UniProtKB-UniRule"/>
</dbReference>
<dbReference type="GO" id="GO:0003697">
    <property type="term" value="F:single-stranded DNA binding"/>
    <property type="evidence" value="ECO:0007669"/>
    <property type="project" value="UniProtKB-UniRule"/>
</dbReference>
<dbReference type="GO" id="GO:0006260">
    <property type="term" value="P:DNA replication"/>
    <property type="evidence" value="ECO:0007669"/>
    <property type="project" value="UniProtKB-UniRule"/>
</dbReference>
<dbReference type="GO" id="GO:0000731">
    <property type="term" value="P:DNA synthesis involved in DNA repair"/>
    <property type="evidence" value="ECO:0007669"/>
    <property type="project" value="TreeGrafter"/>
</dbReference>
<dbReference type="GO" id="GO:0006302">
    <property type="term" value="P:double-strand break repair"/>
    <property type="evidence" value="ECO:0007669"/>
    <property type="project" value="TreeGrafter"/>
</dbReference>
<dbReference type="GO" id="GO:0009432">
    <property type="term" value="P:SOS response"/>
    <property type="evidence" value="ECO:0007669"/>
    <property type="project" value="UniProtKB-UniRule"/>
</dbReference>
<dbReference type="CDD" id="cd03242">
    <property type="entry name" value="ABC_RecF"/>
    <property type="match status" value="1"/>
</dbReference>
<dbReference type="Gene3D" id="3.40.50.300">
    <property type="entry name" value="P-loop containing nucleotide triphosphate hydrolases"/>
    <property type="match status" value="1"/>
</dbReference>
<dbReference type="Gene3D" id="1.20.1050.90">
    <property type="entry name" value="RecF/RecN/SMC, N-terminal domain"/>
    <property type="match status" value="1"/>
</dbReference>
<dbReference type="HAMAP" id="MF_00365">
    <property type="entry name" value="RecF"/>
    <property type="match status" value="1"/>
</dbReference>
<dbReference type="InterPro" id="IPR001238">
    <property type="entry name" value="DNA-binding_RecF"/>
</dbReference>
<dbReference type="InterPro" id="IPR018078">
    <property type="entry name" value="DNA-binding_RecF_CS"/>
</dbReference>
<dbReference type="InterPro" id="IPR027417">
    <property type="entry name" value="P-loop_NTPase"/>
</dbReference>
<dbReference type="InterPro" id="IPR003395">
    <property type="entry name" value="RecF/RecN/SMC_N"/>
</dbReference>
<dbReference type="InterPro" id="IPR042174">
    <property type="entry name" value="RecF_2"/>
</dbReference>
<dbReference type="NCBIfam" id="TIGR00611">
    <property type="entry name" value="recf"/>
    <property type="match status" value="1"/>
</dbReference>
<dbReference type="PANTHER" id="PTHR32182">
    <property type="entry name" value="DNA REPLICATION AND REPAIR PROTEIN RECF"/>
    <property type="match status" value="1"/>
</dbReference>
<dbReference type="PANTHER" id="PTHR32182:SF0">
    <property type="entry name" value="DNA REPLICATION AND REPAIR PROTEIN RECF"/>
    <property type="match status" value="1"/>
</dbReference>
<dbReference type="Pfam" id="PF02463">
    <property type="entry name" value="SMC_N"/>
    <property type="match status" value="1"/>
</dbReference>
<dbReference type="SUPFAM" id="SSF52540">
    <property type="entry name" value="P-loop containing nucleoside triphosphate hydrolases"/>
    <property type="match status" value="1"/>
</dbReference>
<dbReference type="PROSITE" id="PS00617">
    <property type="entry name" value="RECF_1"/>
    <property type="match status" value="1"/>
</dbReference>
<dbReference type="PROSITE" id="PS00618">
    <property type="entry name" value="RECF_2"/>
    <property type="match status" value="1"/>
</dbReference>